<dbReference type="EMBL" id="D13096">
    <property type="protein sequence ID" value="BAA02412.1"/>
    <property type="molecule type" value="Genomic_RNA"/>
</dbReference>
<dbReference type="PIR" id="JQ1723">
    <property type="entry name" value="JQ1723"/>
</dbReference>
<dbReference type="SMR" id="P36696"/>
<dbReference type="GO" id="GO:0044178">
    <property type="term" value="C:host cell Golgi membrane"/>
    <property type="evidence" value="ECO:0007669"/>
    <property type="project" value="UniProtKB-SubCell"/>
</dbReference>
<dbReference type="GO" id="GO:0016020">
    <property type="term" value="C:membrane"/>
    <property type="evidence" value="ECO:0007669"/>
    <property type="project" value="UniProtKB-UniRule"/>
</dbReference>
<dbReference type="GO" id="GO:0140975">
    <property type="term" value="P:disruption of cellular anatomical structure in another organism"/>
    <property type="evidence" value="ECO:0007669"/>
    <property type="project" value="UniProtKB-UniRule"/>
</dbReference>
<dbReference type="GO" id="GO:0046760">
    <property type="term" value="P:viral budding from Golgi membrane"/>
    <property type="evidence" value="ECO:0007669"/>
    <property type="project" value="UniProtKB-UniRule"/>
</dbReference>
<dbReference type="HAMAP" id="MF_04205">
    <property type="entry name" value="ALPHA_CORONA_E"/>
    <property type="match status" value="1"/>
</dbReference>
<dbReference type="InterPro" id="IPR043507">
    <property type="entry name" value="E_protein_aCoV"/>
</dbReference>
<dbReference type="InterPro" id="IPR003873">
    <property type="entry name" value="E_protein_CoV"/>
</dbReference>
<dbReference type="Pfam" id="PF02723">
    <property type="entry name" value="CoV_E"/>
    <property type="match status" value="1"/>
</dbReference>
<dbReference type="PROSITE" id="PS51926">
    <property type="entry name" value="COV_E"/>
    <property type="match status" value="1"/>
</dbReference>
<gene>
    <name evidence="1" type="primary">E</name>
    <name type="synonym">sM</name>
</gene>
<accession>P36696</accession>
<name>VEMP_CVCAI</name>
<reference key="1">
    <citation type="journal article" date="1992" name="J. Gen. Virol.">
        <title>Analysis of a 9.6 kb sequence from the 3' end of canine coronavirus genomic RNA.</title>
        <authorList>
            <person name="Horsburgh B.C."/>
            <person name="Brierley I."/>
            <person name="Brown T.D.K."/>
        </authorList>
    </citation>
    <scope>NUCLEOTIDE SEQUENCE [GENOMIC RNA]</scope>
</reference>
<proteinExistence type="inferred from homology"/>
<organism>
    <name type="scientific">Canine coronavirus (strain Insavc-1)</name>
    <name type="common">CCoV</name>
    <name type="synonym">Canine enteric coronavirus</name>
    <dbReference type="NCBI Taxonomy" id="36391"/>
    <lineage>
        <taxon>Viruses</taxon>
        <taxon>Riboviria</taxon>
        <taxon>Orthornavirae</taxon>
        <taxon>Pisuviricota</taxon>
        <taxon>Pisoniviricetes</taxon>
        <taxon>Nidovirales</taxon>
        <taxon>Cornidovirineae</taxon>
        <taxon>Coronaviridae</taxon>
        <taxon>Orthocoronavirinae</taxon>
        <taxon>Alphacoronavirus</taxon>
        <taxon>Tegacovirus</taxon>
        <taxon>Alphacoronavirus 1</taxon>
    </lineage>
</organism>
<protein>
    <recommendedName>
        <fullName evidence="1">Envelope small membrane protein</fullName>
        <shortName evidence="1">E protein</shortName>
        <shortName evidence="1">sM protein</shortName>
    </recommendedName>
</protein>
<comment type="function">
    <text evidence="1">Plays a central role in virus morphogenesis and assembly. Acts as a viroporin and self-assembles in host membranes forming pentameric protein-lipid pores that allow ion transport. Also plays a role in the induction of apoptosis.</text>
</comment>
<comment type="subunit">
    <text evidence="1">Homopentamer. Interacts with membrane protein M in the budding compartment of the host cell, which is located between endoplasmic reticulum and the Golgi complex. Interacts with Nucleoprotein.</text>
</comment>
<comment type="subcellular location">
    <subcellularLocation>
        <location evidence="1">Host Golgi apparatus membrane</location>
        <topology evidence="1">Single-pass type III membrane protein</topology>
    </subcellularLocation>
    <text evidence="1">The cytoplasmic tail functions as a Golgi complex-targeting signal.</text>
</comment>
<comment type="similarity">
    <text evidence="1">Belongs to the alphacoronaviruses E protein family.</text>
</comment>
<keyword id="KW-0053">Apoptosis</keyword>
<keyword id="KW-1040">Host Golgi apparatus</keyword>
<keyword id="KW-1043">Host membrane</keyword>
<keyword id="KW-0472">Membrane</keyword>
<keyword id="KW-0812">Transmembrane</keyword>
<keyword id="KW-1133">Transmembrane helix</keyword>
<feature type="chain" id="PRO_0000106084" description="Envelope small membrane protein">
    <location>
        <begin position="1"/>
        <end position="82"/>
    </location>
</feature>
<feature type="topological domain" description="Virion surface" evidence="1">
    <location>
        <begin position="1"/>
        <end position="19"/>
    </location>
</feature>
<feature type="transmembrane region" description="Helical" evidence="1">
    <location>
        <begin position="20"/>
        <end position="40"/>
    </location>
</feature>
<feature type="topological domain" description="Intravirion" evidence="1">
    <location>
        <begin position="41"/>
        <end position="82"/>
    </location>
</feature>
<evidence type="ECO:0000255" key="1">
    <source>
        <dbReference type="HAMAP-Rule" id="MF_04205"/>
    </source>
</evidence>
<organismHost>
    <name type="scientific">Canis lupus familiaris</name>
    <name type="common">Dog</name>
    <name type="synonym">Canis familiaris</name>
    <dbReference type="NCBI Taxonomy" id="9615"/>
</organismHost>
<sequence>MTFPRALTVIDDNGMVISIIFWFLLIIILILFSIALLNIIKLCMVCCNLGRTVIIVPARHAYDAYKNFMQIRAYNPDEALLV</sequence>